<feature type="chain" id="PRO_0000365272" description="Photosystem II reaction center protein Psb30">
    <location>
        <begin position="1"/>
        <end position="33"/>
    </location>
</feature>
<feature type="transmembrane region" description="Helical" evidence="1">
    <location>
        <begin position="5"/>
        <end position="25"/>
    </location>
</feature>
<sequence>MNIDILSQLIAIAVTLFLGPVVVILIASRNGNL</sequence>
<protein>
    <recommendedName>
        <fullName evidence="1">Photosystem II reaction center protein Psb30</fullName>
    </recommendedName>
    <alternativeName>
        <fullName evidence="1">Photosystem II reaction center protein Ycf12</fullName>
    </alternativeName>
</protein>
<dbReference type="EMBL" id="EF587378">
    <property type="protein sequence ID" value="ABU88218.1"/>
    <property type="molecule type" value="Genomic_DNA"/>
</dbReference>
<dbReference type="EMBL" id="EU677193">
    <property type="protein sequence ID" value="ACC97265.1"/>
    <property type="molecule type" value="Genomic_DNA"/>
</dbReference>
<dbReference type="RefSeq" id="YP_002000375.1">
    <property type="nucleotide sequence ID" value="NC_011031.1"/>
</dbReference>
<dbReference type="SMR" id="B2X205"/>
<dbReference type="GeneID" id="6440117"/>
<dbReference type="GO" id="GO:0009535">
    <property type="term" value="C:chloroplast thylakoid membrane"/>
    <property type="evidence" value="ECO:0007669"/>
    <property type="project" value="UniProtKB-SubCell"/>
</dbReference>
<dbReference type="GO" id="GO:0009523">
    <property type="term" value="C:photosystem II"/>
    <property type="evidence" value="ECO:0007669"/>
    <property type="project" value="UniProtKB-KW"/>
</dbReference>
<dbReference type="GO" id="GO:0015979">
    <property type="term" value="P:photosynthesis"/>
    <property type="evidence" value="ECO:0007669"/>
    <property type="project" value="UniProtKB-KW"/>
</dbReference>
<dbReference type="HAMAP" id="MF_01329">
    <property type="entry name" value="PSII_Psb30_Ycf12"/>
    <property type="match status" value="1"/>
</dbReference>
<dbReference type="InterPro" id="IPR010284">
    <property type="entry name" value="PSII_Ycf12_core-subunit"/>
</dbReference>
<dbReference type="Pfam" id="PF05969">
    <property type="entry name" value="PSII_Ycf12"/>
    <property type="match status" value="1"/>
</dbReference>
<reference key="1">
    <citation type="journal article" date="2008" name="J. Phycol.">
        <title>Deep division in the Chlorophyceae (Chlorophyta) revealed by chloroplast phylogenomic analyseS.</title>
        <authorList>
            <person name="Turmel M."/>
            <person name="Brouard J.-S."/>
            <person name="Gagnon C."/>
            <person name="Otis C."/>
            <person name="Lemieux C."/>
        </authorList>
        <dbReference type="AGRICOLA" id="IND44059346"/>
    </citation>
    <scope>NUCLEOTIDE SEQUENCE [GENOMIC DNA]</scope>
    <source>
        <strain>SAG 575-1b / CCAP 575/1B / UTEX LB 40</strain>
    </source>
</reference>
<reference key="2">
    <citation type="journal article" date="2008" name="BMC Genomics">
        <title>Chloroplast DNA sequence of the green alga Oedogonium cardiacum (Chlorophyceae): unique genome architecture, derived characters shared with the Chaetophorales and novel genes acquired through horizontal transfer.</title>
        <authorList>
            <person name="Brouard J.-S."/>
            <person name="Otis C."/>
            <person name="Lemieux C."/>
            <person name="Turmel M."/>
        </authorList>
    </citation>
    <scope>NUCLEOTIDE SEQUENCE [LARGE SCALE GENOMIC DNA]</scope>
    <source>
        <strain>SAG 575-1b / CCAP 575/1B / UTEX LB 40</strain>
    </source>
</reference>
<comment type="function">
    <text evidence="1">A core subunit of photosystem II (PSII), probably helps stabilize the reaction center.</text>
</comment>
<comment type="subunit">
    <text evidence="1">PSII is composed of 1 copy each of membrane proteins PsbA, PsbB, PsbC, PsbD, PsbE, PsbF, PsbH, PsbI, PsbJ, PsbK, PsbL, PsbM, PsbT, PsbX, PsbY, PsbZ, Psb30/Ycf12, peripheral proteins of the oxygen-evolving complex and a large number of cofactors. It forms dimeric complexes.</text>
</comment>
<comment type="subcellular location">
    <subcellularLocation>
        <location evidence="1">Plastid</location>
        <location evidence="1">Chloroplast thylakoid membrane</location>
        <topology evidence="1">Single-pass membrane protein</topology>
    </subcellularLocation>
</comment>
<comment type="similarity">
    <text evidence="1">Belongs to the Psb30/Ycf12 family.</text>
</comment>
<organism>
    <name type="scientific">Oedogonium cardiacum</name>
    <name type="common">Filamentous green alga</name>
    <dbReference type="NCBI Taxonomy" id="55995"/>
    <lineage>
        <taxon>Eukaryota</taxon>
        <taxon>Viridiplantae</taxon>
        <taxon>Chlorophyta</taxon>
        <taxon>core chlorophytes</taxon>
        <taxon>Chlorophyceae</taxon>
        <taxon>OCC clade</taxon>
        <taxon>Oedogoniales</taxon>
        <taxon>Oedogoniaceae</taxon>
        <taxon>Oedogonium</taxon>
    </lineage>
</organism>
<name>PSB30_OEDCA</name>
<evidence type="ECO:0000255" key="1">
    <source>
        <dbReference type="HAMAP-Rule" id="MF_01329"/>
    </source>
</evidence>
<keyword id="KW-0150">Chloroplast</keyword>
<keyword id="KW-0472">Membrane</keyword>
<keyword id="KW-0602">Photosynthesis</keyword>
<keyword id="KW-0604">Photosystem II</keyword>
<keyword id="KW-0934">Plastid</keyword>
<keyword id="KW-0793">Thylakoid</keyword>
<keyword id="KW-0812">Transmembrane</keyword>
<keyword id="KW-1133">Transmembrane helix</keyword>
<proteinExistence type="inferred from homology"/>
<geneLocation type="chloroplast"/>
<gene>
    <name evidence="1" type="primary">psb30</name>
    <name evidence="1" type="synonym">ycf12</name>
</gene>
<accession>B2X205</accession>